<dbReference type="EMBL" id="FN806773">
    <property type="protein sequence ID" value="CBL57417.1"/>
    <property type="status" value="ALT_INIT"/>
    <property type="molecule type" value="Genomic_DNA"/>
</dbReference>
<dbReference type="EMBL" id="AJ535195">
    <property type="protein sequence ID" value="CAD59396.1"/>
    <property type="molecule type" value="Genomic_DNA"/>
</dbReference>
<dbReference type="RefSeq" id="WP_041704245.1">
    <property type="nucleotide sequence ID" value="NC_014215.1"/>
</dbReference>
<dbReference type="SMR" id="Q7WSY8"/>
<dbReference type="STRING" id="754252.PFREUD_19250"/>
<dbReference type="GeneID" id="61221488"/>
<dbReference type="KEGG" id="pfr:PFREUD_19250"/>
<dbReference type="eggNOG" id="COG0542">
    <property type="taxonomic scope" value="Bacteria"/>
</dbReference>
<dbReference type="HOGENOM" id="CLU_005070_4_0_11"/>
<dbReference type="Proteomes" id="UP000000936">
    <property type="component" value="Chromosome"/>
</dbReference>
<dbReference type="GO" id="GO:0005737">
    <property type="term" value="C:cytoplasm"/>
    <property type="evidence" value="ECO:0007669"/>
    <property type="project" value="UniProtKB-SubCell"/>
</dbReference>
<dbReference type="GO" id="GO:0005524">
    <property type="term" value="F:ATP binding"/>
    <property type="evidence" value="ECO:0007669"/>
    <property type="project" value="UniProtKB-KW"/>
</dbReference>
<dbReference type="GO" id="GO:0016887">
    <property type="term" value="F:ATP hydrolysis activity"/>
    <property type="evidence" value="ECO:0007669"/>
    <property type="project" value="InterPro"/>
</dbReference>
<dbReference type="GO" id="GO:0034605">
    <property type="term" value="P:cellular response to heat"/>
    <property type="evidence" value="ECO:0007669"/>
    <property type="project" value="TreeGrafter"/>
</dbReference>
<dbReference type="GO" id="GO:0042026">
    <property type="term" value="P:protein refolding"/>
    <property type="evidence" value="ECO:0007669"/>
    <property type="project" value="InterPro"/>
</dbReference>
<dbReference type="CDD" id="cd00009">
    <property type="entry name" value="AAA"/>
    <property type="match status" value="1"/>
</dbReference>
<dbReference type="CDD" id="cd19499">
    <property type="entry name" value="RecA-like_ClpB_Hsp104-like"/>
    <property type="match status" value="1"/>
</dbReference>
<dbReference type="FunFam" id="1.10.8.60:FF:000017">
    <property type="entry name" value="ATP-dependent chaperone ClpB"/>
    <property type="match status" value="1"/>
</dbReference>
<dbReference type="FunFam" id="3.40.50.300:FF:000120">
    <property type="entry name" value="ATP-dependent chaperone ClpB"/>
    <property type="match status" value="1"/>
</dbReference>
<dbReference type="FunFam" id="3.40.50.300:FF:000025">
    <property type="entry name" value="ATP-dependent Clp protease subunit"/>
    <property type="match status" value="1"/>
</dbReference>
<dbReference type="FunFam" id="3.40.50.300:FF:000010">
    <property type="entry name" value="Chaperone clpB 1, putative"/>
    <property type="match status" value="1"/>
</dbReference>
<dbReference type="Gene3D" id="1.10.8.60">
    <property type="match status" value="1"/>
</dbReference>
<dbReference type="Gene3D" id="1.10.1780.10">
    <property type="entry name" value="Clp, N-terminal domain"/>
    <property type="match status" value="1"/>
</dbReference>
<dbReference type="Gene3D" id="3.40.50.300">
    <property type="entry name" value="P-loop containing nucleotide triphosphate hydrolases"/>
    <property type="match status" value="3"/>
</dbReference>
<dbReference type="InterPro" id="IPR003593">
    <property type="entry name" value="AAA+_ATPase"/>
</dbReference>
<dbReference type="InterPro" id="IPR003959">
    <property type="entry name" value="ATPase_AAA_core"/>
</dbReference>
<dbReference type="InterPro" id="IPR017730">
    <property type="entry name" value="Chaperonin_ClpB"/>
</dbReference>
<dbReference type="InterPro" id="IPR019489">
    <property type="entry name" value="Clp_ATPase_C"/>
</dbReference>
<dbReference type="InterPro" id="IPR036628">
    <property type="entry name" value="Clp_N_dom_sf"/>
</dbReference>
<dbReference type="InterPro" id="IPR004176">
    <property type="entry name" value="Clp_R_dom"/>
</dbReference>
<dbReference type="InterPro" id="IPR001270">
    <property type="entry name" value="ClpA/B"/>
</dbReference>
<dbReference type="InterPro" id="IPR018368">
    <property type="entry name" value="ClpA/B_CS1"/>
</dbReference>
<dbReference type="InterPro" id="IPR028299">
    <property type="entry name" value="ClpA/B_CS2"/>
</dbReference>
<dbReference type="InterPro" id="IPR041546">
    <property type="entry name" value="ClpA/ClpB_AAA_lid"/>
</dbReference>
<dbReference type="InterPro" id="IPR050130">
    <property type="entry name" value="ClpA_ClpB"/>
</dbReference>
<dbReference type="InterPro" id="IPR027417">
    <property type="entry name" value="P-loop_NTPase"/>
</dbReference>
<dbReference type="NCBIfam" id="TIGR03346">
    <property type="entry name" value="chaperone_ClpB"/>
    <property type="match status" value="1"/>
</dbReference>
<dbReference type="PANTHER" id="PTHR11638">
    <property type="entry name" value="ATP-DEPENDENT CLP PROTEASE"/>
    <property type="match status" value="1"/>
</dbReference>
<dbReference type="PANTHER" id="PTHR11638:SF18">
    <property type="entry name" value="HEAT SHOCK PROTEIN 104"/>
    <property type="match status" value="1"/>
</dbReference>
<dbReference type="Pfam" id="PF00004">
    <property type="entry name" value="AAA"/>
    <property type="match status" value="1"/>
</dbReference>
<dbReference type="Pfam" id="PF07724">
    <property type="entry name" value="AAA_2"/>
    <property type="match status" value="1"/>
</dbReference>
<dbReference type="Pfam" id="PF17871">
    <property type="entry name" value="AAA_lid_9"/>
    <property type="match status" value="1"/>
</dbReference>
<dbReference type="Pfam" id="PF02861">
    <property type="entry name" value="Clp_N"/>
    <property type="match status" value="2"/>
</dbReference>
<dbReference type="Pfam" id="PF10431">
    <property type="entry name" value="ClpB_D2-small"/>
    <property type="match status" value="1"/>
</dbReference>
<dbReference type="PRINTS" id="PR00300">
    <property type="entry name" value="CLPPROTEASEA"/>
</dbReference>
<dbReference type="SMART" id="SM00382">
    <property type="entry name" value="AAA"/>
    <property type="match status" value="2"/>
</dbReference>
<dbReference type="SMART" id="SM01086">
    <property type="entry name" value="ClpB_D2-small"/>
    <property type="match status" value="1"/>
</dbReference>
<dbReference type="SUPFAM" id="SSF81923">
    <property type="entry name" value="Double Clp-N motif"/>
    <property type="match status" value="1"/>
</dbReference>
<dbReference type="SUPFAM" id="SSF52540">
    <property type="entry name" value="P-loop containing nucleoside triphosphate hydrolases"/>
    <property type="match status" value="2"/>
</dbReference>
<dbReference type="PROSITE" id="PS51903">
    <property type="entry name" value="CLP_R"/>
    <property type="match status" value="1"/>
</dbReference>
<dbReference type="PROSITE" id="PS00870">
    <property type="entry name" value="CLPAB_1"/>
    <property type="match status" value="1"/>
</dbReference>
<dbReference type="PROSITE" id="PS00871">
    <property type="entry name" value="CLPAB_2"/>
    <property type="match status" value="1"/>
</dbReference>
<comment type="function">
    <text evidence="1">Part of a stress-induced multi-chaperone system, it is involved in the recovery of the cell from heat-induced damage, in cooperation with DnaK, DnaJ and GrpE. Acts before DnaK, in the processing of protein aggregates. Protein binding stimulates the ATPase activity; ATP hydrolysis unfolds the denatured protein aggregates, which probably helps expose new hydrophobic binding sites on the surface of ClpB-bound aggregates, contributing to the solubilization and refolding of denatured protein aggregates by DnaK (By similarity).</text>
</comment>
<comment type="subunit">
    <text evidence="1">Homohexamer. The oligomerization is ATP-dependent (By similarity).</text>
</comment>
<comment type="subcellular location">
    <subcellularLocation>
        <location evidence="5">Cytoplasm</location>
    </subcellularLocation>
</comment>
<comment type="induction">
    <text evidence="4">By heat shock, bile salts stress and other stress conditions.</text>
</comment>
<comment type="domain">
    <text evidence="1">The Clp repeat (R) domain probably functions as a substrate-discriminating domain, recruiting aggregated proteins to the ClpB hexamer and/or stabilizing bound proteins. The NBD2 domain is responsible for oligomerization, whereas the NBD1 domain stabilizes the hexamer probably in an ATP-dependent manner. The movement of the coiled-coil domain is essential for ClpB ability to rescue proteins from an aggregated state, probably by pulling apart large aggregated proteins, which are bound between the coiled-coils motifs of adjacent ClpB subunits in the functional hexamer (By similarity).</text>
</comment>
<comment type="similarity">
    <text evidence="5">Belongs to the ClpA/ClpB family.</text>
</comment>
<comment type="sequence caution" evidence="5">
    <conflict type="erroneous initiation">
        <sequence resource="EMBL-CDS" id="CBL57417"/>
    </conflict>
    <text>Truncated N-terminus.</text>
</comment>
<name>CLPB_PROFC</name>
<accession>Q7WSY8</accession>
<accession>D7GFV6</accession>
<keyword id="KW-0067">ATP-binding</keyword>
<keyword id="KW-0143">Chaperone</keyword>
<keyword id="KW-0175">Coiled coil</keyword>
<keyword id="KW-0963">Cytoplasm</keyword>
<keyword id="KW-0547">Nucleotide-binding</keyword>
<keyword id="KW-1185">Reference proteome</keyword>
<keyword id="KW-0677">Repeat</keyword>
<keyword id="KW-0346">Stress response</keyword>
<protein>
    <recommendedName>
        <fullName>Chaperone protein ClpB</fullName>
    </recommendedName>
</protein>
<feature type="chain" id="PRO_0000191157" description="Chaperone protein ClpB">
    <location>
        <begin position="1"/>
        <end position="866"/>
    </location>
</feature>
<feature type="domain" description="Clp R" evidence="2">
    <location>
        <begin position="3"/>
        <end position="147"/>
    </location>
</feature>
<feature type="region of interest" description="Repeat 1" evidence="2">
    <location>
        <begin position="6"/>
        <end position="71"/>
    </location>
</feature>
<feature type="region of interest" description="Repeat 2" evidence="2">
    <location>
        <begin position="84"/>
        <end position="147"/>
    </location>
</feature>
<feature type="region of interest" description="NBD1" evidence="1">
    <location>
        <begin position="160"/>
        <end position="341"/>
    </location>
</feature>
<feature type="region of interest" description="Linker" evidence="1">
    <location>
        <begin position="342"/>
        <end position="548"/>
    </location>
</feature>
<feature type="region of interest" description="Disordered" evidence="3">
    <location>
        <begin position="515"/>
        <end position="534"/>
    </location>
</feature>
<feature type="region of interest" description="NBD2" evidence="1">
    <location>
        <begin position="558"/>
        <end position="766"/>
    </location>
</feature>
<feature type="region of interest" description="C-terminal" evidence="1">
    <location>
        <begin position="767"/>
        <end position="866"/>
    </location>
</feature>
<feature type="coiled-coil region" evidence="1">
    <location>
        <begin position="392"/>
        <end position="526"/>
    </location>
</feature>
<feature type="binding site" evidence="1">
    <location>
        <begin position="207"/>
        <end position="214"/>
    </location>
    <ligand>
        <name>ATP</name>
        <dbReference type="ChEBI" id="CHEBI:30616"/>
        <label>1</label>
    </ligand>
</feature>
<feature type="binding site" evidence="1">
    <location>
        <begin position="608"/>
        <end position="615"/>
    </location>
    <ligand>
        <name>ATP</name>
        <dbReference type="ChEBI" id="CHEBI:30616"/>
        <label>2</label>
    </ligand>
</feature>
<feature type="sequence conflict" description="In Ref. 2; CAD59396." evidence="5" ref="2">
    <original>A</original>
    <variation>V</variation>
    <location>
        <position position="685"/>
    </location>
</feature>
<feature type="sequence conflict" description="In Ref. 2; CAD59396." evidence="5" ref="2">
    <original>I</original>
    <variation>F</variation>
    <location>
        <position position="692"/>
    </location>
</feature>
<feature type="sequence conflict" description="In Ref. 2; CAD59396." evidence="5" ref="2">
    <original>A</original>
    <variation>V</variation>
    <location>
        <position position="729"/>
    </location>
</feature>
<reference key="1">
    <citation type="journal article" date="2010" name="PLoS ONE">
        <title>The complete genome of Propionibacterium freudenreichii CIRM-BIA1, a hardy actinobacterium with food and probiotic applications.</title>
        <authorList>
            <person name="Falentin H."/>
            <person name="Deutsch S.M."/>
            <person name="Jan G."/>
            <person name="Loux V."/>
            <person name="Thierry A."/>
            <person name="Parayre S."/>
            <person name="Maillard M.B."/>
            <person name="Dherbecourt J."/>
            <person name="Cousin F.J."/>
            <person name="Jardin J."/>
            <person name="Siguier P."/>
            <person name="Couloux A."/>
            <person name="Barbe V."/>
            <person name="Vacherie B."/>
            <person name="Wincker P."/>
            <person name="Gibrat J.F."/>
            <person name="Gaillardin C."/>
            <person name="Lortal S."/>
        </authorList>
    </citation>
    <scope>NUCLEOTIDE SEQUENCE [LARGE SCALE GENOMIC DNA]</scope>
    <source>
        <strain>ATCC 9614 / DSM 4902 / CIP 103027 / NCIMB 8099 / CIRM-BIA1</strain>
    </source>
</reference>
<reference key="2">
    <citation type="journal article" date="2003" name="Appl. Environ. Microbiol.">
        <title>Susceptibility and adaptive response to bile salts in Propionibacterium freudenreichii: physiological and proteomic analysis.</title>
        <authorList>
            <person name="Leverrier P."/>
            <person name="Dimova D."/>
            <person name="Pichereau V."/>
            <person name="Auffray Y."/>
            <person name="Boyaval P."/>
            <person name="Jan G."/>
        </authorList>
    </citation>
    <scope>NUCLEOTIDE SEQUENCE [GENOMIC DNA] OF 1-729</scope>
    <scope>INDUCTION</scope>
</reference>
<organism>
    <name type="scientific">Propionibacterium freudenreichii subsp. shermanii (strain ATCC 9614 / DSM 4902 / CIP 103027 / NCIMB 8099 / CIRM-BIA1)</name>
    <dbReference type="NCBI Taxonomy" id="754252"/>
    <lineage>
        <taxon>Bacteria</taxon>
        <taxon>Bacillati</taxon>
        <taxon>Actinomycetota</taxon>
        <taxon>Actinomycetes</taxon>
        <taxon>Propionibacteriales</taxon>
        <taxon>Propionibacteriaceae</taxon>
        <taxon>Propionibacterium</taxon>
    </lineage>
</organism>
<gene>
    <name type="primary">clpB</name>
    <name type="ordered locus">PFREUD_19250</name>
</gene>
<proteinExistence type="evidence at transcript level"/>
<sequence length="866" mass="94436">MDTEKLTTMSRDAVTAAVRLALTKGNPTAEPVHLLHAMLMVPESSVAPLLKAVGADAARVDGAASAAIDKLPSSSGSSVAQPQLSGALARVLADAETRADKLGDQFVSTEHLLIALAEVDSDAKNILASNGVTTAALEKAFNDSRGDKRITSAESEGGESALDKYSIDLTQRAKDGKLDPVIGRDSEIRRVAQVLSRRTKNNPVLIGEAGVGKTAVVEGLAQRIVKGDVPDSLKGRRLVSLDLASMVAGAKYRGEFEERLKAVLNEIKSAEGQIITFIDELHTVVGAGASEGSMDASNMLKPLLARGELRLIGATTLDEYREHIEKDPALERRFQQVYVGEPSVEDTVAILRGLRERYEAHHKVRITDSALVAAAQLSHRYITGRQLPDKAIDLVDEAASRLRMEIDSSPEEIDTLRRQVDRLTMEQFAVEKEEDPGSKARLARINSDLADAKEQLRGLEARWAAEKEGLNKVGELKTRIDALRTEADKHTRDGDLAKASEILYGEIPELNKQLDEASAAEEDSQGKSMVSEEVTSDDIAEVVSAWTGVPVGKMLEGESEKLLDMENRIGKRLVGQQAAVKAVSDAVRRSRAGISDPNRPTGSFMFLGPTGVGKTELAKALADFLFDDETAMVRIDMSEYMEKHSVSRLVGAPPGYVGYEEGGQLTEAVRRRPYSVVLLDEIEKAHPDVFNILLQVLDDGRLTDGQGRTVDFRNVILIMTSNLGSQFMADPSMSPEERRNQVMAVVKDHFRPEFLNRLDEIVLFDELSREDLDKIVDISLDKLNRRLAERRISIDVSAAAREWLARTGYDPVYGARPLRRLIQTTVEDQLARAMLAGTISDDQKVSVDMNQAGDGVDVKGEAPVSA</sequence>
<evidence type="ECO:0000250" key="1"/>
<evidence type="ECO:0000255" key="2">
    <source>
        <dbReference type="PROSITE-ProRule" id="PRU01251"/>
    </source>
</evidence>
<evidence type="ECO:0000256" key="3">
    <source>
        <dbReference type="SAM" id="MobiDB-lite"/>
    </source>
</evidence>
<evidence type="ECO:0000269" key="4">
    <source>
    </source>
</evidence>
<evidence type="ECO:0000305" key="5"/>